<feature type="initiator methionine" description="Removed" evidence="2">
    <location>
        <position position="1"/>
    </location>
</feature>
<feature type="chain" id="PRO_0000289662" description="Phenylethanolamine N-methyltransferase">
    <location>
        <begin position="2"/>
        <end position="283"/>
    </location>
</feature>
<feature type="binding site" evidence="2">
    <location>
        <position position="35"/>
    </location>
    <ligand>
        <name>S-adenosyl-L-methionine</name>
        <dbReference type="ChEBI" id="CHEBI:59789"/>
    </ligand>
</feature>
<feature type="binding site" evidence="2">
    <location>
        <position position="40"/>
    </location>
    <ligand>
        <name>S-adenosyl-L-methionine</name>
        <dbReference type="ChEBI" id="CHEBI:59789"/>
    </ligand>
</feature>
<feature type="binding site" evidence="2">
    <location>
        <begin position="79"/>
        <end position="80"/>
    </location>
    <ligand>
        <name>S-adenosyl-L-methionine</name>
        <dbReference type="ChEBI" id="CHEBI:59789"/>
    </ligand>
</feature>
<feature type="binding site" evidence="2">
    <location>
        <position position="85"/>
    </location>
    <ligand>
        <name>S-adenosyl-L-methionine</name>
        <dbReference type="ChEBI" id="CHEBI:59789"/>
    </ligand>
</feature>
<feature type="binding site" evidence="2">
    <location>
        <position position="101"/>
    </location>
    <ligand>
        <name>S-adenosyl-L-methionine</name>
        <dbReference type="ChEBI" id="CHEBI:59789"/>
    </ligand>
</feature>
<feature type="binding site" evidence="2">
    <location>
        <position position="106"/>
    </location>
    <ligand>
        <name>S-adenosyl-L-methionine</name>
        <dbReference type="ChEBI" id="CHEBI:59789"/>
    </ligand>
</feature>
<feature type="binding site" evidence="2">
    <location>
        <begin position="158"/>
        <end position="159"/>
    </location>
    <ligand>
        <name>S-adenosyl-L-methionine</name>
        <dbReference type="ChEBI" id="CHEBI:59789"/>
    </ligand>
</feature>
<feature type="binding site" evidence="2">
    <location>
        <position position="181"/>
    </location>
    <ligand>
        <name>S-adenosyl-L-methionine</name>
        <dbReference type="ChEBI" id="CHEBI:59789"/>
    </ligand>
</feature>
<feature type="binding site" evidence="2">
    <location>
        <position position="219"/>
    </location>
    <ligand>
        <name>octopamine</name>
        <dbReference type="ChEBI" id="CHEBI:58025"/>
    </ligand>
</feature>
<feature type="binding site" evidence="2">
    <location>
        <position position="267"/>
    </location>
    <ligand>
        <name>octopamine</name>
        <dbReference type="ChEBI" id="CHEBI:58025"/>
    </ligand>
</feature>
<feature type="modified residue" description="Phosphoserine" evidence="2">
    <location>
        <position position="7"/>
    </location>
</feature>
<protein>
    <recommendedName>
        <fullName>Phenylethanolamine N-methyltransferase</fullName>
        <shortName>PNMTase</shortName>
        <ecNumber evidence="2">2.1.1.28</ecNumber>
    </recommendedName>
    <alternativeName>
        <fullName>Noradrenaline N-methyltransferase</fullName>
    </alternativeName>
</protein>
<gene>
    <name type="primary">PNMT</name>
</gene>
<organism>
    <name type="scientific">Sus scrofa</name>
    <name type="common">Pig</name>
    <dbReference type="NCBI Taxonomy" id="9823"/>
    <lineage>
        <taxon>Eukaryota</taxon>
        <taxon>Metazoa</taxon>
        <taxon>Chordata</taxon>
        <taxon>Craniata</taxon>
        <taxon>Vertebrata</taxon>
        <taxon>Euteleostomi</taxon>
        <taxon>Mammalia</taxon>
        <taxon>Eutheria</taxon>
        <taxon>Laurasiatheria</taxon>
        <taxon>Artiodactyla</taxon>
        <taxon>Suina</taxon>
        <taxon>Suidae</taxon>
        <taxon>Sus</taxon>
    </lineage>
</organism>
<reference key="1">
    <citation type="submission" date="2006-08" db="EMBL/GenBank/DDBJ databases">
        <authorList>
            <person name="Liu G.Y."/>
        </authorList>
    </citation>
    <scope>NUCLEOTIDE SEQUENCE [LARGE SCALE MRNA]</scope>
</reference>
<keyword id="KW-0127">Catecholamine biosynthesis</keyword>
<keyword id="KW-0489">Methyltransferase</keyword>
<keyword id="KW-0597">Phosphoprotein</keyword>
<keyword id="KW-1185">Reference proteome</keyword>
<keyword id="KW-0949">S-adenosyl-L-methionine</keyword>
<keyword id="KW-0808">Transferase</keyword>
<dbReference type="EC" id="2.1.1.28" evidence="2"/>
<dbReference type="EMBL" id="DQ917626">
    <property type="protein sequence ID" value="ABI97171.1"/>
    <property type="molecule type" value="mRNA"/>
</dbReference>
<dbReference type="RefSeq" id="NP_001116636.1">
    <property type="nucleotide sequence ID" value="NM_001123164.1"/>
</dbReference>
<dbReference type="SMR" id="Q06AU9"/>
<dbReference type="FunCoup" id="Q06AU9">
    <property type="interactions" value="55"/>
</dbReference>
<dbReference type="STRING" id="9823.ENSSSCP00000018549"/>
<dbReference type="PaxDb" id="9823-ENSSSCP00000018549"/>
<dbReference type="Ensembl" id="ENSSSCT00000019054.5">
    <property type="protein sequence ID" value="ENSSSCP00000018549.2"/>
    <property type="gene ID" value="ENSSSCG00000017501.5"/>
</dbReference>
<dbReference type="Ensembl" id="ENSSSCT00025078014.1">
    <property type="protein sequence ID" value="ENSSSCP00025033812.1"/>
    <property type="gene ID" value="ENSSSCG00025057035.1"/>
</dbReference>
<dbReference type="Ensembl" id="ENSSSCT00035075914.1">
    <property type="protein sequence ID" value="ENSSSCP00035030955.1"/>
    <property type="gene ID" value="ENSSSCG00035056795.1"/>
</dbReference>
<dbReference type="Ensembl" id="ENSSSCT00045065783.1">
    <property type="protein sequence ID" value="ENSSSCP00045046575.1"/>
    <property type="gene ID" value="ENSSSCG00045038036.1"/>
</dbReference>
<dbReference type="Ensembl" id="ENSSSCT00050092630.1">
    <property type="protein sequence ID" value="ENSSSCP00050039929.1"/>
    <property type="gene ID" value="ENSSSCG00050067889.1"/>
</dbReference>
<dbReference type="Ensembl" id="ENSSSCT00055007324.1">
    <property type="protein sequence ID" value="ENSSSCP00055005785.1"/>
    <property type="gene ID" value="ENSSSCG00055003728.1"/>
</dbReference>
<dbReference type="Ensembl" id="ENSSSCT00065103151.1">
    <property type="protein sequence ID" value="ENSSSCP00065045556.1"/>
    <property type="gene ID" value="ENSSSCG00065074846.1"/>
</dbReference>
<dbReference type="Ensembl" id="ENSSSCT00070033324.1">
    <property type="protein sequence ID" value="ENSSSCP00070027835.1"/>
    <property type="gene ID" value="ENSSSCG00070016924.1"/>
</dbReference>
<dbReference type="Ensembl" id="ENSSSCT00085017218">
    <property type="protein sequence ID" value="ENSSSCP00085012116"/>
    <property type="gene ID" value="ENSSSCG00085009139"/>
</dbReference>
<dbReference type="Ensembl" id="ENSSSCT00090012443">
    <property type="protein sequence ID" value="ENSSSCP00090007927"/>
    <property type="gene ID" value="ENSSSCG00090007022"/>
</dbReference>
<dbReference type="Ensembl" id="ENSSSCT00105075546">
    <property type="protein sequence ID" value="ENSSSCP00105053525"/>
    <property type="gene ID" value="ENSSSCG00105039612"/>
</dbReference>
<dbReference type="Ensembl" id="ENSSSCT00110071145">
    <property type="protein sequence ID" value="ENSSSCP00110050018"/>
    <property type="gene ID" value="ENSSSCG00110037447"/>
</dbReference>
<dbReference type="Ensembl" id="ENSSSCT00115039675">
    <property type="protein sequence ID" value="ENSSSCP00115037378"/>
    <property type="gene ID" value="ENSSSCG00115022412"/>
</dbReference>
<dbReference type="GeneID" id="100144479"/>
<dbReference type="KEGG" id="ssc:100144479"/>
<dbReference type="CTD" id="5409"/>
<dbReference type="VGNC" id="VGNC:91602">
    <property type="gene designation" value="PNMT"/>
</dbReference>
<dbReference type="eggNOG" id="ENOG502QT44">
    <property type="taxonomic scope" value="Eukaryota"/>
</dbReference>
<dbReference type="GeneTree" id="ENSGT00390000011708"/>
<dbReference type="HOGENOM" id="CLU_082526_2_0_1"/>
<dbReference type="InParanoid" id="Q06AU9"/>
<dbReference type="OMA" id="NNYMPPR"/>
<dbReference type="OrthoDB" id="10050085at2759"/>
<dbReference type="TreeFam" id="TF313114"/>
<dbReference type="Reactome" id="R-SSC-209905">
    <property type="pathway name" value="Catecholamine biosynthesis"/>
</dbReference>
<dbReference type="UniPathway" id="UPA00749">
    <property type="reaction ID" value="UER00736"/>
</dbReference>
<dbReference type="Proteomes" id="UP000008227">
    <property type="component" value="Chromosome 12"/>
</dbReference>
<dbReference type="Proteomes" id="UP000314985">
    <property type="component" value="Chromosome 12"/>
</dbReference>
<dbReference type="Proteomes" id="UP000694570">
    <property type="component" value="Unplaced"/>
</dbReference>
<dbReference type="Proteomes" id="UP000694571">
    <property type="component" value="Unplaced"/>
</dbReference>
<dbReference type="Proteomes" id="UP000694720">
    <property type="component" value="Unplaced"/>
</dbReference>
<dbReference type="Proteomes" id="UP000694722">
    <property type="component" value="Unplaced"/>
</dbReference>
<dbReference type="Proteomes" id="UP000694723">
    <property type="component" value="Unplaced"/>
</dbReference>
<dbReference type="Proteomes" id="UP000694724">
    <property type="component" value="Unplaced"/>
</dbReference>
<dbReference type="Proteomes" id="UP000694725">
    <property type="component" value="Unplaced"/>
</dbReference>
<dbReference type="Proteomes" id="UP000694726">
    <property type="component" value="Unplaced"/>
</dbReference>
<dbReference type="Proteomes" id="UP000694727">
    <property type="component" value="Unplaced"/>
</dbReference>
<dbReference type="Proteomes" id="UP000694728">
    <property type="component" value="Unplaced"/>
</dbReference>
<dbReference type="Bgee" id="ENSSSCG00000017501">
    <property type="expression patterns" value="Expressed in longissimus lumborum muscle and 12 other cell types or tissues"/>
</dbReference>
<dbReference type="GO" id="GO:0005829">
    <property type="term" value="C:cytosol"/>
    <property type="evidence" value="ECO:0000318"/>
    <property type="project" value="GO_Central"/>
</dbReference>
<dbReference type="GO" id="GO:0004603">
    <property type="term" value="F:phenylethanolamine N-methyltransferase activity"/>
    <property type="evidence" value="ECO:0000250"/>
    <property type="project" value="UniProtKB"/>
</dbReference>
<dbReference type="GO" id="GO:0042418">
    <property type="term" value="P:epinephrine biosynthetic process"/>
    <property type="evidence" value="ECO:0007669"/>
    <property type="project" value="UniProtKB-UniPathway"/>
</dbReference>
<dbReference type="GO" id="GO:0032259">
    <property type="term" value="P:methylation"/>
    <property type="evidence" value="ECO:0007669"/>
    <property type="project" value="UniProtKB-KW"/>
</dbReference>
<dbReference type="FunFam" id="3.40.50.150:FF:000065">
    <property type="entry name" value="Phenylethanolamine N-methyltransferase"/>
    <property type="match status" value="1"/>
</dbReference>
<dbReference type="Gene3D" id="3.40.50.150">
    <property type="entry name" value="Vaccinia Virus protein VP39"/>
    <property type="match status" value="1"/>
</dbReference>
<dbReference type="InterPro" id="IPR025820">
    <property type="entry name" value="NNMT/PNMT/TEMT_CS"/>
</dbReference>
<dbReference type="InterPro" id="IPR000940">
    <property type="entry name" value="NNMT_TEMT_trans"/>
</dbReference>
<dbReference type="InterPro" id="IPR053384">
    <property type="entry name" value="SAM-dep_methyltransferase"/>
</dbReference>
<dbReference type="InterPro" id="IPR029063">
    <property type="entry name" value="SAM-dependent_MTases_sf"/>
</dbReference>
<dbReference type="NCBIfam" id="NF041360">
    <property type="entry name" value="GntF_guanitoxin"/>
    <property type="match status" value="1"/>
</dbReference>
<dbReference type="PANTHER" id="PTHR10867">
    <property type="entry name" value="NNMT/PNMT/TEMT FAMILY MEMBER"/>
    <property type="match status" value="1"/>
</dbReference>
<dbReference type="PANTHER" id="PTHR10867:SF18">
    <property type="entry name" value="PHENYLETHANOLAMINE N-METHYLTRANSFERASE"/>
    <property type="match status" value="1"/>
</dbReference>
<dbReference type="Pfam" id="PF01234">
    <property type="entry name" value="NNMT_PNMT_TEMT"/>
    <property type="match status" value="1"/>
</dbReference>
<dbReference type="PIRSF" id="PIRSF000384">
    <property type="entry name" value="PNMTase"/>
    <property type="match status" value="1"/>
</dbReference>
<dbReference type="SUPFAM" id="SSF53335">
    <property type="entry name" value="S-adenosyl-L-methionine-dependent methyltransferases"/>
    <property type="match status" value="1"/>
</dbReference>
<dbReference type="PROSITE" id="PS01100">
    <property type="entry name" value="NNMT_PNMT_TEMT"/>
    <property type="match status" value="1"/>
</dbReference>
<dbReference type="PROSITE" id="PS51681">
    <property type="entry name" value="SAM_MT_NNMT_PNMT_TEMT"/>
    <property type="match status" value="1"/>
</dbReference>
<proteinExistence type="evidence at transcript level"/>
<accession>Q06AU9</accession>
<sequence length="283" mass="30879">MSGTGQSHAADAAPDSDPGQAAVALAYQHFEPRAYLRNNYAPPRGDLSSPDGVGPWKLRCLAQTFATGEVSGRALIDIGSGPTIYQLLSACAHFEDITMTDFLEVNRQELGLWLREEPGAFDWSVYSQHVCLIEGKGESCQEKERQLRARVKRILPIDVHQPQPLGTGSLAPLPADALVSAFCLEAVSPDLASFQRALDHITTLLRSGGHLLLIGALEESWYLAGEARLAVVPVCEEEVREALARSGYEVRDLRTYVMPAHLRTGVDDVKGIFFAWAQKKVGV</sequence>
<evidence type="ECO:0000250" key="1">
    <source>
        <dbReference type="UniProtKB" id="P10937"/>
    </source>
</evidence>
<evidence type="ECO:0000250" key="2">
    <source>
        <dbReference type="UniProtKB" id="P11086"/>
    </source>
</evidence>
<evidence type="ECO:0000305" key="3"/>
<name>PNMT_PIG</name>
<comment type="function">
    <text evidence="2">Catalyzes the transmethylation of nonepinephrine (noradrenaline) to form epinephrine (adrenaline), using S-adenosyl-L-methionine as the methyl donor. Other substrates include phenylethanolamine, octopamine and normetanephrine (By similarity).</text>
</comment>
<comment type="catalytic activity">
    <reaction evidence="2">
        <text>phenylethanolamine + S-adenosyl-L-methionine = N-methylphenylethanolamine + S-adenosyl-L-homocysteine + H(+)</text>
        <dbReference type="Rhea" id="RHEA:12176"/>
        <dbReference type="ChEBI" id="CHEBI:15378"/>
        <dbReference type="ChEBI" id="CHEBI:57741"/>
        <dbReference type="ChEBI" id="CHEBI:57856"/>
        <dbReference type="ChEBI" id="CHEBI:57946"/>
        <dbReference type="ChEBI" id="CHEBI:59789"/>
        <dbReference type="EC" id="2.1.1.28"/>
    </reaction>
    <physiologicalReaction direction="left-to-right" evidence="2">
        <dbReference type="Rhea" id="RHEA:12177"/>
    </physiologicalReaction>
</comment>
<comment type="catalytic activity">
    <reaction evidence="2">
        <text>(R)-noradrenaline + S-adenosyl-L-methionine = (R)-adrenaline + S-adenosyl-L-homocysteine + H(+)</text>
        <dbReference type="Rhea" id="RHEA:25269"/>
        <dbReference type="ChEBI" id="CHEBI:15378"/>
        <dbReference type="ChEBI" id="CHEBI:57856"/>
        <dbReference type="ChEBI" id="CHEBI:59789"/>
        <dbReference type="ChEBI" id="CHEBI:71406"/>
        <dbReference type="ChEBI" id="CHEBI:72587"/>
        <dbReference type="EC" id="2.1.1.28"/>
    </reaction>
    <physiologicalReaction direction="left-to-right" evidence="2">
        <dbReference type="Rhea" id="RHEA:25270"/>
    </physiologicalReaction>
</comment>
<comment type="catalytic activity">
    <reaction evidence="1">
        <text>(R)-normetanephrine + S-adenosyl-L-methionine = (R)-metanephrine + S-adenosyl-L-homocysteine + H(+)</text>
        <dbReference type="Rhea" id="RHEA:70683"/>
        <dbReference type="ChEBI" id="CHEBI:15378"/>
        <dbReference type="ChEBI" id="CHEBI:57856"/>
        <dbReference type="ChEBI" id="CHEBI:59789"/>
        <dbReference type="ChEBI" id="CHEBI:189645"/>
        <dbReference type="ChEBI" id="CHEBI:189646"/>
    </reaction>
    <physiologicalReaction direction="left-to-right" evidence="1">
        <dbReference type="Rhea" id="RHEA:70684"/>
    </physiologicalReaction>
</comment>
<comment type="catalytic activity">
    <reaction evidence="1">
        <text>(R)-octopamine + S-adenosyl-L-methionine = (R)-synephrine + S-adenosyl-L-homocysteine + H(+)</text>
        <dbReference type="Rhea" id="RHEA:70519"/>
        <dbReference type="ChEBI" id="CHEBI:15378"/>
        <dbReference type="ChEBI" id="CHEBI:57856"/>
        <dbReference type="ChEBI" id="CHEBI:59789"/>
        <dbReference type="ChEBI" id="CHEBI:63694"/>
        <dbReference type="ChEBI" id="CHEBI:141486"/>
    </reaction>
    <physiologicalReaction direction="left-to-right" evidence="1">
        <dbReference type="Rhea" id="RHEA:70520"/>
    </physiologicalReaction>
</comment>
<comment type="pathway">
    <text evidence="2">Catecholamine biosynthesis; (R)-adrenaline biosynthesis; (R)-adrenaline from (R)-noradrenaline: step 1/1.</text>
</comment>
<comment type="similarity">
    <text evidence="3">Belongs to the class I-like SAM-binding methyltransferase superfamily. NNMT/PNMT/TEMT family.</text>
</comment>